<dbReference type="EC" id="7.2.2.10" evidence="9"/>
<dbReference type="EMBL" id="KF240826">
    <property type="protein sequence ID" value="AGW24530.1"/>
    <property type="molecule type" value="mRNA"/>
</dbReference>
<dbReference type="EMBL" id="AL662968">
    <property type="protein sequence ID" value="CAD41784.2"/>
    <property type="molecule type" value="Genomic_DNA"/>
</dbReference>
<dbReference type="EMBL" id="AL662996">
    <property type="protein sequence ID" value="CAE03884.2"/>
    <property type="molecule type" value="Genomic_DNA"/>
</dbReference>
<dbReference type="EMBL" id="AP008210">
    <property type="protein sequence ID" value="BAF15709.1"/>
    <property type="molecule type" value="Genomic_DNA"/>
</dbReference>
<dbReference type="EMBL" id="AP014960">
    <property type="protein sequence ID" value="BAS90883.1"/>
    <property type="molecule type" value="Genomic_DNA"/>
</dbReference>
<dbReference type="EMBL" id="CM000141">
    <property type="protein sequence ID" value="EEE61631.1"/>
    <property type="molecule type" value="Genomic_DNA"/>
</dbReference>
<dbReference type="RefSeq" id="XP_015636669.1">
    <property type="nucleotide sequence ID" value="XM_015781183.1"/>
</dbReference>
<dbReference type="SMR" id="Q7X8B5"/>
<dbReference type="FunCoup" id="Q7X8B5">
    <property type="interactions" value="2917"/>
</dbReference>
<dbReference type="STRING" id="39947.Q7X8B5"/>
<dbReference type="GlyCosmos" id="Q7X8B5">
    <property type="glycosylation" value="3 sites, No reported glycans"/>
</dbReference>
<dbReference type="PaxDb" id="39947-Q7X8B5"/>
<dbReference type="EnsemblPlants" id="Os04t0605500-01">
    <property type="protein sequence ID" value="Os04t0605500-01"/>
    <property type="gene ID" value="Os04g0605500"/>
</dbReference>
<dbReference type="EnsemblPlants" id="Os04t0605500-02">
    <property type="protein sequence ID" value="Os04t0605500-02"/>
    <property type="gene ID" value="Os04g0605500"/>
</dbReference>
<dbReference type="Gramene" id="Os04t0605500-01">
    <property type="protein sequence ID" value="Os04t0605500-01"/>
    <property type="gene ID" value="Os04g0605500"/>
</dbReference>
<dbReference type="Gramene" id="Os04t0605500-02">
    <property type="protein sequence ID" value="Os04t0605500-02"/>
    <property type="gene ID" value="Os04g0605500"/>
</dbReference>
<dbReference type="KEGG" id="dosa:Os04g0605500"/>
<dbReference type="eggNOG" id="KOG0204">
    <property type="taxonomic scope" value="Eukaryota"/>
</dbReference>
<dbReference type="HOGENOM" id="CLU_002360_9_0_1"/>
<dbReference type="InParanoid" id="Q7X8B5"/>
<dbReference type="OMA" id="QLAVTFM"/>
<dbReference type="OrthoDB" id="3352408at2759"/>
<dbReference type="Proteomes" id="UP000000763">
    <property type="component" value="Chromosome 4"/>
</dbReference>
<dbReference type="Proteomes" id="UP000007752">
    <property type="component" value="Chromosome 4"/>
</dbReference>
<dbReference type="Proteomes" id="UP000059680">
    <property type="component" value="Chromosome 4"/>
</dbReference>
<dbReference type="ExpressionAtlas" id="Q7X8B5">
    <property type="expression patterns" value="baseline and differential"/>
</dbReference>
<dbReference type="GO" id="GO:0043231">
    <property type="term" value="C:intracellular membrane-bounded organelle"/>
    <property type="evidence" value="ECO:0000318"/>
    <property type="project" value="GO_Central"/>
</dbReference>
<dbReference type="GO" id="GO:0005886">
    <property type="term" value="C:plasma membrane"/>
    <property type="evidence" value="ECO:0000314"/>
    <property type="project" value="UniProtKB"/>
</dbReference>
<dbReference type="GO" id="GO:0005524">
    <property type="term" value="F:ATP binding"/>
    <property type="evidence" value="ECO:0007669"/>
    <property type="project" value="UniProtKB-KW"/>
</dbReference>
<dbReference type="GO" id="GO:0016887">
    <property type="term" value="F:ATP hydrolysis activity"/>
    <property type="evidence" value="ECO:0007669"/>
    <property type="project" value="InterPro"/>
</dbReference>
<dbReference type="GO" id="GO:0005516">
    <property type="term" value="F:calmodulin binding"/>
    <property type="evidence" value="ECO:0007669"/>
    <property type="project" value="UniProtKB-KW"/>
</dbReference>
<dbReference type="GO" id="GO:0046872">
    <property type="term" value="F:metal ion binding"/>
    <property type="evidence" value="ECO:0007669"/>
    <property type="project" value="UniProtKB-KW"/>
</dbReference>
<dbReference type="GO" id="GO:0005388">
    <property type="term" value="F:P-type calcium transporter activity"/>
    <property type="evidence" value="ECO:0000318"/>
    <property type="project" value="GO_Central"/>
</dbReference>
<dbReference type="GO" id="GO:0009409">
    <property type="term" value="P:response to cold"/>
    <property type="evidence" value="ECO:0000315"/>
    <property type="project" value="UniProtKB"/>
</dbReference>
<dbReference type="GO" id="GO:0009414">
    <property type="term" value="P:response to water deprivation"/>
    <property type="evidence" value="ECO:0000315"/>
    <property type="project" value="UniProtKB"/>
</dbReference>
<dbReference type="CDD" id="cd02081">
    <property type="entry name" value="P-type_ATPase_Ca_PMCA-like"/>
    <property type="match status" value="1"/>
</dbReference>
<dbReference type="FunFam" id="1.20.1110.10:FF:000036">
    <property type="entry name" value="Calcium-transporting ATPase"/>
    <property type="match status" value="1"/>
</dbReference>
<dbReference type="FunFam" id="1.20.1110.10:FF:000039">
    <property type="entry name" value="Calcium-transporting ATPase"/>
    <property type="match status" value="1"/>
</dbReference>
<dbReference type="FunFam" id="1.20.5.170:FF:000029">
    <property type="entry name" value="Calcium-transporting ATPase"/>
    <property type="match status" value="1"/>
</dbReference>
<dbReference type="FunFam" id="2.70.150.10:FF:000006">
    <property type="entry name" value="Calcium-transporting ATPase"/>
    <property type="match status" value="1"/>
</dbReference>
<dbReference type="FunFam" id="3.40.1110.10:FF:000013">
    <property type="entry name" value="Calcium-transporting ATPase"/>
    <property type="match status" value="1"/>
</dbReference>
<dbReference type="FunFam" id="3.40.50.1000:FF:000011">
    <property type="entry name" value="Calcium-transporting ATPase"/>
    <property type="match status" value="1"/>
</dbReference>
<dbReference type="FunFam" id="1.20.1110.10:FF:000097">
    <property type="entry name" value="Calcium-transporting ATPase 9 plasma membrane-type"/>
    <property type="match status" value="1"/>
</dbReference>
<dbReference type="Gene3D" id="1.20.5.170">
    <property type="match status" value="1"/>
</dbReference>
<dbReference type="Gene3D" id="3.40.1110.10">
    <property type="entry name" value="Calcium-transporting ATPase, cytoplasmic domain N"/>
    <property type="match status" value="1"/>
</dbReference>
<dbReference type="Gene3D" id="2.70.150.10">
    <property type="entry name" value="Calcium-transporting ATPase, cytoplasmic transduction domain A"/>
    <property type="match status" value="1"/>
</dbReference>
<dbReference type="Gene3D" id="1.20.1110.10">
    <property type="entry name" value="Calcium-transporting ATPase, transmembrane domain"/>
    <property type="match status" value="1"/>
</dbReference>
<dbReference type="Gene3D" id="3.40.50.1000">
    <property type="entry name" value="HAD superfamily/HAD-like"/>
    <property type="match status" value="1"/>
</dbReference>
<dbReference type="InterPro" id="IPR006068">
    <property type="entry name" value="ATPase_P-typ_cation-transptr_C"/>
</dbReference>
<dbReference type="InterPro" id="IPR004014">
    <property type="entry name" value="ATPase_P-typ_cation-transptr_N"/>
</dbReference>
<dbReference type="InterPro" id="IPR023299">
    <property type="entry name" value="ATPase_P-typ_cyto_dom_N"/>
</dbReference>
<dbReference type="InterPro" id="IPR018303">
    <property type="entry name" value="ATPase_P-typ_P_site"/>
</dbReference>
<dbReference type="InterPro" id="IPR023298">
    <property type="entry name" value="ATPase_P-typ_TM_dom_sf"/>
</dbReference>
<dbReference type="InterPro" id="IPR008250">
    <property type="entry name" value="ATPase_P-typ_transduc_dom_A_sf"/>
</dbReference>
<dbReference type="InterPro" id="IPR024750">
    <property type="entry name" value="Ca_ATPase_N_dom"/>
</dbReference>
<dbReference type="InterPro" id="IPR036412">
    <property type="entry name" value="HAD-like_sf"/>
</dbReference>
<dbReference type="InterPro" id="IPR023214">
    <property type="entry name" value="HAD_sf"/>
</dbReference>
<dbReference type="InterPro" id="IPR006408">
    <property type="entry name" value="P-type_ATPase_IIB"/>
</dbReference>
<dbReference type="InterPro" id="IPR001757">
    <property type="entry name" value="P_typ_ATPase"/>
</dbReference>
<dbReference type="InterPro" id="IPR044492">
    <property type="entry name" value="P_typ_ATPase_HD_dom"/>
</dbReference>
<dbReference type="NCBIfam" id="TIGR01517">
    <property type="entry name" value="ATPase-IIB_Ca"/>
    <property type="match status" value="1"/>
</dbReference>
<dbReference type="NCBIfam" id="TIGR01494">
    <property type="entry name" value="ATPase_P-type"/>
    <property type="match status" value="2"/>
</dbReference>
<dbReference type="PANTHER" id="PTHR24093:SF369">
    <property type="entry name" value="CALCIUM-TRANSPORTING ATPASE"/>
    <property type="match status" value="1"/>
</dbReference>
<dbReference type="PANTHER" id="PTHR24093">
    <property type="entry name" value="CATION TRANSPORTING ATPASE"/>
    <property type="match status" value="1"/>
</dbReference>
<dbReference type="Pfam" id="PF12515">
    <property type="entry name" value="CaATP_NAI"/>
    <property type="match status" value="1"/>
</dbReference>
<dbReference type="Pfam" id="PF13246">
    <property type="entry name" value="Cation_ATPase"/>
    <property type="match status" value="1"/>
</dbReference>
<dbReference type="Pfam" id="PF00689">
    <property type="entry name" value="Cation_ATPase_C"/>
    <property type="match status" value="1"/>
</dbReference>
<dbReference type="Pfam" id="PF00690">
    <property type="entry name" value="Cation_ATPase_N"/>
    <property type="match status" value="1"/>
</dbReference>
<dbReference type="Pfam" id="PF00122">
    <property type="entry name" value="E1-E2_ATPase"/>
    <property type="match status" value="1"/>
</dbReference>
<dbReference type="Pfam" id="PF00702">
    <property type="entry name" value="Hydrolase"/>
    <property type="match status" value="1"/>
</dbReference>
<dbReference type="PRINTS" id="PR00119">
    <property type="entry name" value="CATATPASE"/>
</dbReference>
<dbReference type="PRINTS" id="PR00121">
    <property type="entry name" value="NAKATPASE"/>
</dbReference>
<dbReference type="SFLD" id="SFLDG00002">
    <property type="entry name" value="C1.7:_P-type_atpase_like"/>
    <property type="match status" value="1"/>
</dbReference>
<dbReference type="SFLD" id="SFLDF00027">
    <property type="entry name" value="p-type_atpase"/>
    <property type="match status" value="1"/>
</dbReference>
<dbReference type="SMART" id="SM00831">
    <property type="entry name" value="Cation_ATPase_N"/>
    <property type="match status" value="1"/>
</dbReference>
<dbReference type="SUPFAM" id="SSF81653">
    <property type="entry name" value="Calcium ATPase, transduction domain A"/>
    <property type="match status" value="1"/>
</dbReference>
<dbReference type="SUPFAM" id="SSF81665">
    <property type="entry name" value="Calcium ATPase, transmembrane domain M"/>
    <property type="match status" value="1"/>
</dbReference>
<dbReference type="SUPFAM" id="SSF56784">
    <property type="entry name" value="HAD-like"/>
    <property type="match status" value="1"/>
</dbReference>
<dbReference type="SUPFAM" id="SSF81660">
    <property type="entry name" value="Metal cation-transporting ATPase, ATP-binding domain N"/>
    <property type="match status" value="1"/>
</dbReference>
<dbReference type="PROSITE" id="PS00154">
    <property type="entry name" value="ATPASE_E1_E2"/>
    <property type="match status" value="1"/>
</dbReference>
<keyword id="KW-0067">ATP-binding</keyword>
<keyword id="KW-0106">Calcium</keyword>
<keyword id="KW-0109">Calcium transport</keyword>
<keyword id="KW-0112">Calmodulin-binding</keyword>
<keyword id="KW-1003">Cell membrane</keyword>
<keyword id="KW-0325">Glycoprotein</keyword>
<keyword id="KW-0406">Ion transport</keyword>
<keyword id="KW-0460">Magnesium</keyword>
<keyword id="KW-0472">Membrane</keyword>
<keyword id="KW-0479">Metal-binding</keyword>
<keyword id="KW-0547">Nucleotide-binding</keyword>
<keyword id="KW-1185">Reference proteome</keyword>
<keyword id="KW-0346">Stress response</keyword>
<keyword id="KW-1278">Translocase</keyword>
<keyword id="KW-0812">Transmembrane</keyword>
<keyword id="KW-1133">Transmembrane helix</keyword>
<keyword id="KW-0813">Transport</keyword>
<feature type="chain" id="PRO_0000439551" description="Calcium-transporting ATPase 5, plasma membrane-type">
    <location>
        <begin position="1"/>
        <end position="1088"/>
    </location>
</feature>
<feature type="topological domain" description="Cytoplasmic" evidence="9">
    <location>
        <begin position="1"/>
        <end position="198"/>
    </location>
</feature>
<feature type="transmembrane region" description="Helical" evidence="2">
    <location>
        <begin position="199"/>
        <end position="219"/>
    </location>
</feature>
<feature type="topological domain" description="Extracellular" evidence="9">
    <location>
        <begin position="220"/>
        <end position="221"/>
    </location>
</feature>
<feature type="transmembrane region" description="Helical" evidence="2">
    <location>
        <begin position="222"/>
        <end position="242"/>
    </location>
</feature>
<feature type="topological domain" description="Cytoplasmic" evidence="9">
    <location>
        <begin position="243"/>
        <end position="338"/>
    </location>
</feature>
<feature type="transmembrane region" description="Helical" evidence="2">
    <location>
        <begin position="339"/>
        <end position="359"/>
    </location>
</feature>
<feature type="topological domain" description="Extracellular" evidence="9">
    <location>
        <begin position="360"/>
        <end position="375"/>
    </location>
</feature>
<feature type="transmembrane region" description="Helical" evidence="2">
    <location>
        <begin position="376"/>
        <end position="396"/>
    </location>
</feature>
<feature type="topological domain" description="Cytoplasmic" evidence="9">
    <location>
        <begin position="397"/>
        <end position="425"/>
    </location>
</feature>
<feature type="transmembrane region" description="Helical" evidence="2">
    <location>
        <begin position="426"/>
        <end position="446"/>
    </location>
</feature>
<feature type="topological domain" description="Extracellular" evidence="9">
    <location>
        <begin position="447"/>
        <end position="851"/>
    </location>
</feature>
<feature type="transmembrane region" description="Helical" evidence="2">
    <location>
        <begin position="852"/>
        <end position="872"/>
    </location>
</feature>
<feature type="topological domain" description="Cytoplasmic" evidence="9">
    <location>
        <begin position="873"/>
        <end position="880"/>
    </location>
</feature>
<feature type="transmembrane region" description="Helical" evidence="2">
    <location>
        <begin position="881"/>
        <end position="901"/>
    </location>
</feature>
<feature type="topological domain" description="Extracellular" evidence="9">
    <location>
        <begin position="902"/>
        <end position="919"/>
    </location>
</feature>
<feature type="transmembrane region" description="Helical" evidence="2">
    <location>
        <begin position="920"/>
        <end position="940"/>
    </location>
</feature>
<feature type="topological domain" description="Cytoplasmic" evidence="9">
    <location>
        <begin position="941"/>
        <end position="1000"/>
    </location>
</feature>
<feature type="transmembrane region" description="Helical" evidence="2">
    <location>
        <begin position="1001"/>
        <end position="1021"/>
    </location>
</feature>
<feature type="topological domain" description="Extracellular" evidence="9">
    <location>
        <begin position="1022"/>
        <end position="1030"/>
    </location>
</feature>
<feature type="transmembrane region" description="Helical" evidence="2">
    <location>
        <begin position="1031"/>
        <end position="1051"/>
    </location>
</feature>
<feature type="topological domain" description="Cytoplasmic" evidence="9">
    <location>
        <begin position="1052"/>
        <end position="1088"/>
    </location>
</feature>
<feature type="region of interest" description="Disordered" evidence="4">
    <location>
        <begin position="1"/>
        <end position="32"/>
    </location>
</feature>
<feature type="compositionally biased region" description="Low complexity" evidence="4">
    <location>
        <begin position="1"/>
        <end position="11"/>
    </location>
</feature>
<feature type="active site" description="4-aspartylphosphate intermediate" evidence="1">
    <location>
        <position position="486"/>
    </location>
</feature>
<feature type="binding site" evidence="1">
    <location>
        <position position="794"/>
    </location>
    <ligand>
        <name>Mg(2+)</name>
        <dbReference type="ChEBI" id="CHEBI:18420"/>
    </ligand>
</feature>
<feature type="binding site" evidence="1">
    <location>
        <position position="798"/>
    </location>
    <ligand>
        <name>Mg(2+)</name>
        <dbReference type="ChEBI" id="CHEBI:18420"/>
    </ligand>
</feature>
<feature type="glycosylation site" description="N-linked (GlcNAc...) asparagine" evidence="3">
    <location>
        <position position="532"/>
    </location>
</feature>
<feature type="glycosylation site" description="N-linked (GlcNAc...) asparagine" evidence="3">
    <location>
        <position position="569"/>
    </location>
</feature>
<feature type="glycosylation site" description="N-linked (GlcNAc...) asparagine" evidence="3">
    <location>
        <position position="737"/>
    </location>
</feature>
<feature type="sequence conflict" description="In Ref. 1; AGW24530." evidence="9" ref="1">
    <original>E</original>
    <variation>G</variation>
    <location>
        <position position="107"/>
    </location>
</feature>
<feature type="sequence conflict" description="In Ref. 1; AGW24530." evidence="9" ref="1">
    <original>V</original>
    <variation>I</variation>
    <location>
        <position position="702"/>
    </location>
</feature>
<feature type="sequence conflict" description="In Ref. 1; AGW24530." evidence="9" ref="1">
    <original>D</original>
    <variation>G</variation>
    <location>
        <position position="962"/>
    </location>
</feature>
<name>ACA5_ORYSJ</name>
<proteinExistence type="evidence at protein level"/>
<reference key="1">
    <citation type="journal article" date="2013" name="Plant J.">
        <title>OsACA6, a P-type IIB Ca(2+) ATPase promotes salinity and drought stress tolerance in tobacco by ROS scavenging and enhancing the expression of stress-responsive genes.</title>
        <authorList>
            <person name="Huda K.M."/>
            <person name="Banu M.S."/>
            <person name="Garg B."/>
            <person name="Tula S."/>
            <person name="Tuteja R."/>
            <person name="Tuteja N."/>
        </authorList>
    </citation>
    <scope>NUCLEOTIDE SEQUENCE [MRNA]</scope>
    <scope>FUNCTION</scope>
    <scope>SUBCELLULAR LOCATION</scope>
    <scope>INDUCTION</scope>
</reference>
<reference key="2">
    <citation type="journal article" date="2002" name="Nature">
        <title>Sequence and analysis of rice chromosome 4.</title>
        <authorList>
            <person name="Feng Q."/>
            <person name="Zhang Y."/>
            <person name="Hao P."/>
            <person name="Wang S."/>
            <person name="Fu G."/>
            <person name="Huang Y."/>
            <person name="Li Y."/>
            <person name="Zhu J."/>
            <person name="Liu Y."/>
            <person name="Hu X."/>
            <person name="Jia P."/>
            <person name="Zhang Y."/>
            <person name="Zhao Q."/>
            <person name="Ying K."/>
            <person name="Yu S."/>
            <person name="Tang Y."/>
            <person name="Weng Q."/>
            <person name="Zhang L."/>
            <person name="Lu Y."/>
            <person name="Mu J."/>
            <person name="Lu Y."/>
            <person name="Zhang L.S."/>
            <person name="Yu Z."/>
            <person name="Fan D."/>
            <person name="Liu X."/>
            <person name="Lu T."/>
            <person name="Li C."/>
            <person name="Wu Y."/>
            <person name="Sun T."/>
            <person name="Lei H."/>
            <person name="Li T."/>
            <person name="Hu H."/>
            <person name="Guan J."/>
            <person name="Wu M."/>
            <person name="Zhang R."/>
            <person name="Zhou B."/>
            <person name="Chen Z."/>
            <person name="Chen L."/>
            <person name="Jin Z."/>
            <person name="Wang R."/>
            <person name="Yin H."/>
            <person name="Cai Z."/>
            <person name="Ren S."/>
            <person name="Lv G."/>
            <person name="Gu W."/>
            <person name="Zhu G."/>
            <person name="Tu Y."/>
            <person name="Jia J."/>
            <person name="Zhang Y."/>
            <person name="Chen J."/>
            <person name="Kang H."/>
            <person name="Chen X."/>
            <person name="Shao C."/>
            <person name="Sun Y."/>
            <person name="Hu Q."/>
            <person name="Zhang X."/>
            <person name="Zhang W."/>
            <person name="Wang L."/>
            <person name="Ding C."/>
            <person name="Sheng H."/>
            <person name="Gu J."/>
            <person name="Chen S."/>
            <person name="Ni L."/>
            <person name="Zhu F."/>
            <person name="Chen W."/>
            <person name="Lan L."/>
            <person name="Lai Y."/>
            <person name="Cheng Z."/>
            <person name="Gu M."/>
            <person name="Jiang J."/>
            <person name="Li J."/>
            <person name="Hong G."/>
            <person name="Xue Y."/>
            <person name="Han B."/>
        </authorList>
    </citation>
    <scope>NUCLEOTIDE SEQUENCE [LARGE SCALE GENOMIC DNA]</scope>
    <source>
        <strain>cv. Nipponbare</strain>
    </source>
</reference>
<reference key="3">
    <citation type="journal article" date="2005" name="Nature">
        <title>The map-based sequence of the rice genome.</title>
        <authorList>
            <consortium name="International rice genome sequencing project (IRGSP)"/>
        </authorList>
    </citation>
    <scope>NUCLEOTIDE SEQUENCE [LARGE SCALE GENOMIC DNA]</scope>
    <source>
        <strain>cv. Nipponbare</strain>
    </source>
</reference>
<reference key="4">
    <citation type="journal article" date="2008" name="Nucleic Acids Res.">
        <title>The rice annotation project database (RAP-DB): 2008 update.</title>
        <authorList>
            <consortium name="The rice annotation project (RAP)"/>
        </authorList>
    </citation>
    <scope>GENOME REANNOTATION</scope>
    <source>
        <strain>cv. Nipponbare</strain>
    </source>
</reference>
<reference key="5">
    <citation type="journal article" date="2013" name="Rice">
        <title>Improvement of the Oryza sativa Nipponbare reference genome using next generation sequence and optical map data.</title>
        <authorList>
            <person name="Kawahara Y."/>
            <person name="de la Bastide M."/>
            <person name="Hamilton J.P."/>
            <person name="Kanamori H."/>
            <person name="McCombie W.R."/>
            <person name="Ouyang S."/>
            <person name="Schwartz D.C."/>
            <person name="Tanaka T."/>
            <person name="Wu J."/>
            <person name="Zhou S."/>
            <person name="Childs K.L."/>
            <person name="Davidson R.M."/>
            <person name="Lin H."/>
            <person name="Quesada-Ocampo L."/>
            <person name="Vaillancourt B."/>
            <person name="Sakai H."/>
            <person name="Lee S.S."/>
            <person name="Kim J."/>
            <person name="Numa H."/>
            <person name="Itoh T."/>
            <person name="Buell C.R."/>
            <person name="Matsumoto T."/>
        </authorList>
    </citation>
    <scope>GENOME REANNOTATION</scope>
    <source>
        <strain>cv. Nipponbare</strain>
    </source>
</reference>
<reference key="6">
    <citation type="journal article" date="2005" name="PLoS Biol.">
        <title>The genomes of Oryza sativa: a history of duplications.</title>
        <authorList>
            <person name="Yu J."/>
            <person name="Wang J."/>
            <person name="Lin W."/>
            <person name="Li S."/>
            <person name="Li H."/>
            <person name="Zhou J."/>
            <person name="Ni P."/>
            <person name="Dong W."/>
            <person name="Hu S."/>
            <person name="Zeng C."/>
            <person name="Zhang J."/>
            <person name="Zhang Y."/>
            <person name="Li R."/>
            <person name="Xu Z."/>
            <person name="Li S."/>
            <person name="Li X."/>
            <person name="Zheng H."/>
            <person name="Cong L."/>
            <person name="Lin L."/>
            <person name="Yin J."/>
            <person name="Geng J."/>
            <person name="Li G."/>
            <person name="Shi J."/>
            <person name="Liu J."/>
            <person name="Lv H."/>
            <person name="Li J."/>
            <person name="Wang J."/>
            <person name="Deng Y."/>
            <person name="Ran L."/>
            <person name="Shi X."/>
            <person name="Wang X."/>
            <person name="Wu Q."/>
            <person name="Li C."/>
            <person name="Ren X."/>
            <person name="Wang J."/>
            <person name="Wang X."/>
            <person name="Li D."/>
            <person name="Liu D."/>
            <person name="Zhang X."/>
            <person name="Ji Z."/>
            <person name="Zhao W."/>
            <person name="Sun Y."/>
            <person name="Zhang Z."/>
            <person name="Bao J."/>
            <person name="Han Y."/>
            <person name="Dong L."/>
            <person name="Ji J."/>
            <person name="Chen P."/>
            <person name="Wu S."/>
            <person name="Liu J."/>
            <person name="Xiao Y."/>
            <person name="Bu D."/>
            <person name="Tan J."/>
            <person name="Yang L."/>
            <person name="Ye C."/>
            <person name="Zhang J."/>
            <person name="Xu J."/>
            <person name="Zhou Y."/>
            <person name="Yu Y."/>
            <person name="Zhang B."/>
            <person name="Zhuang S."/>
            <person name="Wei H."/>
            <person name="Liu B."/>
            <person name="Lei M."/>
            <person name="Yu H."/>
            <person name="Li Y."/>
            <person name="Xu H."/>
            <person name="Wei S."/>
            <person name="He X."/>
            <person name="Fang L."/>
            <person name="Zhang Z."/>
            <person name="Zhang Y."/>
            <person name="Huang X."/>
            <person name="Su Z."/>
            <person name="Tong W."/>
            <person name="Li J."/>
            <person name="Tong Z."/>
            <person name="Li S."/>
            <person name="Ye J."/>
            <person name="Wang L."/>
            <person name="Fang L."/>
            <person name="Lei T."/>
            <person name="Chen C.-S."/>
            <person name="Chen H.-C."/>
            <person name="Xu Z."/>
            <person name="Li H."/>
            <person name="Huang H."/>
            <person name="Zhang F."/>
            <person name="Xu H."/>
            <person name="Li N."/>
            <person name="Zhao C."/>
            <person name="Li S."/>
            <person name="Dong L."/>
            <person name="Huang Y."/>
            <person name="Li L."/>
            <person name="Xi Y."/>
            <person name="Qi Q."/>
            <person name="Li W."/>
            <person name="Zhang B."/>
            <person name="Hu W."/>
            <person name="Zhang Y."/>
            <person name="Tian X."/>
            <person name="Jiao Y."/>
            <person name="Liang X."/>
            <person name="Jin J."/>
            <person name="Gao L."/>
            <person name="Zheng W."/>
            <person name="Hao B."/>
            <person name="Liu S.-M."/>
            <person name="Wang W."/>
            <person name="Yuan L."/>
            <person name="Cao M."/>
            <person name="McDermott J."/>
            <person name="Samudrala R."/>
            <person name="Wang J."/>
            <person name="Wong G.K.-S."/>
            <person name="Yang H."/>
        </authorList>
    </citation>
    <scope>NUCLEOTIDE SEQUENCE [LARGE SCALE GENOMIC DNA]</scope>
    <source>
        <strain>cv. Nipponbare</strain>
    </source>
</reference>
<reference key="7">
    <citation type="journal article" date="2014" name="FEBS J.">
        <title>Genome-wide expressional and functional analysis of calcium transport elements during abiotic stress and development in rice.</title>
        <authorList>
            <person name="Singh A."/>
            <person name="Kanwar P."/>
            <person name="Yadav A.K."/>
            <person name="Mishra M."/>
            <person name="Jha S.K."/>
            <person name="Baranwal V."/>
            <person name="Pandey A."/>
            <person name="Kapoor S."/>
            <person name="Tyagi A.K."/>
            <person name="Pandey G.K."/>
        </authorList>
    </citation>
    <scope>GENE FAMILY</scope>
    <scope>NOMENCLATURE</scope>
</reference>
<reference key="8">
    <citation type="journal article" date="2014" name="Plant Physiol. Biochem.">
        <title>Salinity and drought tolerant OsACA6 enhances cold tolerance in transgenic tobacco by interacting with stress-inducible proteins.</title>
        <authorList>
            <person name="Kamrul Huda K.M."/>
            <person name="Akhter Banu M.S."/>
            <person name="Yadav S."/>
            <person name="Sahoo R.K."/>
            <person name="Tuteja R."/>
            <person name="Tuteja N."/>
        </authorList>
    </citation>
    <scope>FUNCTION</scope>
    <scope>INTERACTION WITH NOH1</scope>
</reference>
<sequence>MESASSSLATSGRRRSSSGGGGGSWGSIGSAADPFDIPAKGAPVESLKKWRQAALVLNASRRFRYTLDLKREEQREEVISKIRAQAHVVRAAFRFKEAGQVHVQQKEVAAPPVDGALGFGIKEDQLTALTRDHNYSALQQYGGISGVARMLKTDTEKGISGDDSDLTARRNAFGSNTYPRKKGRSFLAFLWDACKDLTLIILMVAAAVSLALGITTEGIKEGWYDGASIAFAVLLVVVVTATSDYKQSLQFQNLNEEKQNIKLEVVRGGRRISVSIYDLVAGDVVPLKIGDQVPADGILISGHSLSVDESSMTGESKIVHKDQKSPFLMSGCKVADGYGTMLVTAVGINTEWGLLMASISEDSGEETPLQVRLNGVATFIGMVGLSVALAVLVVLLARYFTGHTYNPDGSVQYVKGKMGVGQTIRGIVGIFTVAVTIVVVAVPEGLPLAVTLTLAFSMRKMMRDKALVRRLSACETMGSATTICSDKTGTLTLNQMTVVEAYFGGKKMDPPDNVQVLSASISSLIVEGIAQNTSGSIFEPENGQDPEVTGSPTEKAILSWGLKLGMRFNDTRTKSSILHVFPFNSEKKRGGVAVHLGGSESEVHIHWKGAAEIILDSCKSWLAADGSKHSMTPEKISEFKKFIEDMAASSLRCVAFAYRTYEMVDVPSEDRRADWILPEDDLIMLGIVGIKDPCRPGVKDSVRLCAAAGIKVRMVTGDNLQTARAIALECGILSDPNVSEPVIIEGKAFRALSDLEREEAAEKISVMGRSSPNDKLLLVKALRKRGHVVAVTGDGTNDAPALHEADIGLSMGIQGTEVAKESSDIIILDDNFASVVRVVRWGRSVYANIQKFIQFQLTVNVAALIINVVAAVSSGNVPLNAVQLLWVNLIMDTLGALALATEPPTDHLMQRPPVGRREPLITNVMWRNLIIMALFQVIVLLTLNFRGTSLLQLKNDNQAHADKVKNTFIFNTFVLCQVFNEFNARKPDELNIFKGITGNHLFMAIVAITVVLQALIVEFLGKFTSTTRLTWQLWLVSIGLAFFSWPLAFVGKLIPVPERPLGDFFACCCPGSKQAADAKGDDADHSDV</sequence>
<evidence type="ECO:0000250" key="1"/>
<evidence type="ECO:0000255" key="2"/>
<evidence type="ECO:0000255" key="3">
    <source>
        <dbReference type="PROSITE-ProRule" id="PRU00498"/>
    </source>
</evidence>
<evidence type="ECO:0000256" key="4">
    <source>
        <dbReference type="SAM" id="MobiDB-lite"/>
    </source>
</evidence>
<evidence type="ECO:0000269" key="5">
    <source>
    </source>
</evidence>
<evidence type="ECO:0000269" key="6">
    <source>
    </source>
</evidence>
<evidence type="ECO:0000303" key="7">
    <source>
    </source>
</evidence>
<evidence type="ECO:0000303" key="8">
    <source>
    </source>
</evidence>
<evidence type="ECO:0000305" key="9"/>
<evidence type="ECO:0000312" key="10">
    <source>
        <dbReference type="EMBL" id="BAF15709.1"/>
    </source>
</evidence>
<evidence type="ECO:0000312" key="11">
    <source>
        <dbReference type="EMBL" id="CAD41784.2"/>
    </source>
</evidence>
<evidence type="ECO:0000312" key="12">
    <source>
        <dbReference type="EMBL" id="CAE03884.2"/>
    </source>
</evidence>
<evidence type="ECO:0000312" key="13">
    <source>
        <dbReference type="EMBL" id="EEE61631.1"/>
    </source>
</evidence>
<organism>
    <name type="scientific">Oryza sativa subsp. japonica</name>
    <name type="common">Rice</name>
    <dbReference type="NCBI Taxonomy" id="39947"/>
    <lineage>
        <taxon>Eukaryota</taxon>
        <taxon>Viridiplantae</taxon>
        <taxon>Streptophyta</taxon>
        <taxon>Embryophyta</taxon>
        <taxon>Tracheophyta</taxon>
        <taxon>Spermatophyta</taxon>
        <taxon>Magnoliopsida</taxon>
        <taxon>Liliopsida</taxon>
        <taxon>Poales</taxon>
        <taxon>Poaceae</taxon>
        <taxon>BOP clade</taxon>
        <taxon>Oryzoideae</taxon>
        <taxon>Oryzeae</taxon>
        <taxon>Oryzinae</taxon>
        <taxon>Oryza</taxon>
        <taxon>Oryza sativa</taxon>
    </lineage>
</organism>
<accession>Q7X8B5</accession>
<accession>U3N024</accession>
<gene>
    <name evidence="8" type="primary">ACA5</name>
    <name evidence="10" type="ordered locus">Os04g0605500</name>
    <name evidence="9" type="ordered locus">LOC_Os04g51610</name>
    <name evidence="13" type="ORF">OsJ_16068</name>
    <name evidence="11" type="ORF">OSJNBa0035M09.2</name>
    <name evidence="12" type="ORF">OSJNBb0015N08.12</name>
</gene>
<protein>
    <recommendedName>
        <fullName evidence="9">Calcium-transporting ATPase 5, plasma membrane-type</fullName>
        <shortName evidence="8">OsACA5</shortName>
        <ecNumber evidence="9">7.2.2.10</ecNumber>
    </recommendedName>
    <alternativeName>
        <fullName evidence="9">Ca(2+)-ATPase isoform 5</fullName>
    </alternativeName>
    <alternativeName>
        <fullName evidence="7">OsACA6</fullName>
    </alternativeName>
</protein>
<comment type="function">
    <text evidence="1 5 6">This magnesium-dependent enzyme catalyzes the hydrolysis of ATP coupled with the translocation of calcium from the cytosol out of the cell, into the endoplasmic reticulum, or into organelles (By similarity). Involved in salt and drought stress tolerance (PubMed:24128296). Involved in cold stress tolerance (PubMed:24992889).</text>
</comment>
<comment type="catalytic activity">
    <reaction evidence="9">
        <text>Ca(2+)(in) + ATP + H2O = Ca(2+)(out) + ADP + phosphate + H(+)</text>
        <dbReference type="Rhea" id="RHEA:18105"/>
        <dbReference type="ChEBI" id="CHEBI:15377"/>
        <dbReference type="ChEBI" id="CHEBI:15378"/>
        <dbReference type="ChEBI" id="CHEBI:29108"/>
        <dbReference type="ChEBI" id="CHEBI:30616"/>
        <dbReference type="ChEBI" id="CHEBI:43474"/>
        <dbReference type="ChEBI" id="CHEBI:456216"/>
        <dbReference type="EC" id="7.2.2.10"/>
    </reaction>
</comment>
<comment type="activity regulation">
    <text evidence="1">Activated by calmodulin.</text>
</comment>
<comment type="subunit">
    <text evidence="6">Interacts with NOH1.</text>
</comment>
<comment type="subcellular location">
    <subcellularLocation>
        <location evidence="5">Cell membrane</location>
        <topology evidence="2">Multi-pass membrane protein</topology>
    </subcellularLocation>
</comment>
<comment type="induction">
    <text evidence="5">Induced by salt, drought and heat stresses, and abscisic acid (ABA).</text>
</comment>
<comment type="domain">
    <text evidence="1">The N-terminus contains an autoinhibitory calmodulin-binding domain, which binds calmodulin in a calcium-dependent fashion.</text>
</comment>
<comment type="similarity">
    <text evidence="9">Belongs to the cation transport ATPase (P-type) (TC 3.A.3) family. Type IIB subfamily.</text>
</comment>